<gene>
    <name evidence="1" type="primary">obg</name>
    <name type="ordered locus">SAOUHSC_01753</name>
</gene>
<evidence type="ECO:0000255" key="1">
    <source>
        <dbReference type="HAMAP-Rule" id="MF_01454"/>
    </source>
</evidence>
<evidence type="ECO:0000255" key="2">
    <source>
        <dbReference type="PROSITE-ProRule" id="PRU01229"/>
    </source>
</evidence>
<evidence type="ECO:0000255" key="3">
    <source>
        <dbReference type="PROSITE-ProRule" id="PRU01231"/>
    </source>
</evidence>
<evidence type="ECO:0000256" key="4">
    <source>
        <dbReference type="SAM" id="MobiDB-lite"/>
    </source>
</evidence>
<comment type="function">
    <text evidence="1">An essential GTPase which binds GTP, GDP and possibly (p)ppGpp with moderate affinity, with high nucleotide exchange rates and a fairly low GTP hydrolysis rate. Plays a role in control of the cell cycle, stress response, ribosome biogenesis and in those bacteria that undergo differentiation, in morphogenesis control.</text>
</comment>
<comment type="cofactor">
    <cofactor evidence="1">
        <name>Mg(2+)</name>
        <dbReference type="ChEBI" id="CHEBI:18420"/>
    </cofactor>
</comment>
<comment type="subunit">
    <text evidence="1">Monomer.</text>
</comment>
<comment type="subcellular location">
    <subcellularLocation>
        <location evidence="1">Cytoplasm</location>
    </subcellularLocation>
</comment>
<comment type="similarity">
    <text evidence="1">Belongs to the TRAFAC class OBG-HflX-like GTPase superfamily. OBG GTPase family.</text>
</comment>
<protein>
    <recommendedName>
        <fullName evidence="1">GTPase Obg</fullName>
        <ecNumber evidence="1">3.6.5.-</ecNumber>
    </recommendedName>
    <alternativeName>
        <fullName evidence="1">GTP-binding protein Obg</fullName>
    </alternativeName>
</protein>
<dbReference type="EC" id="3.6.5.-" evidence="1"/>
<dbReference type="EMBL" id="CP000253">
    <property type="protein sequence ID" value="ABD30823.1"/>
    <property type="molecule type" value="Genomic_DNA"/>
</dbReference>
<dbReference type="RefSeq" id="YP_500259.1">
    <property type="nucleotide sequence ID" value="NC_007795.1"/>
</dbReference>
<dbReference type="SMR" id="Q2FXT1"/>
<dbReference type="STRING" id="93061.SAOUHSC_01753"/>
<dbReference type="PaxDb" id="1280-SAXN108_1671"/>
<dbReference type="GeneID" id="3920552"/>
<dbReference type="KEGG" id="sao:SAOUHSC_01753"/>
<dbReference type="PATRIC" id="fig|93061.5.peg.1597"/>
<dbReference type="eggNOG" id="COG0536">
    <property type="taxonomic scope" value="Bacteria"/>
</dbReference>
<dbReference type="HOGENOM" id="CLU_011747_2_1_9"/>
<dbReference type="OrthoDB" id="9807318at2"/>
<dbReference type="PRO" id="PR:Q2FXT1"/>
<dbReference type="Proteomes" id="UP000008816">
    <property type="component" value="Chromosome"/>
</dbReference>
<dbReference type="GO" id="GO:0005737">
    <property type="term" value="C:cytoplasm"/>
    <property type="evidence" value="ECO:0007669"/>
    <property type="project" value="UniProtKB-SubCell"/>
</dbReference>
<dbReference type="GO" id="GO:0005525">
    <property type="term" value="F:GTP binding"/>
    <property type="evidence" value="ECO:0000318"/>
    <property type="project" value="GO_Central"/>
</dbReference>
<dbReference type="GO" id="GO:0003924">
    <property type="term" value="F:GTPase activity"/>
    <property type="evidence" value="ECO:0000318"/>
    <property type="project" value="GO_Central"/>
</dbReference>
<dbReference type="GO" id="GO:0000287">
    <property type="term" value="F:magnesium ion binding"/>
    <property type="evidence" value="ECO:0007669"/>
    <property type="project" value="InterPro"/>
</dbReference>
<dbReference type="GO" id="GO:0042254">
    <property type="term" value="P:ribosome biogenesis"/>
    <property type="evidence" value="ECO:0007669"/>
    <property type="project" value="UniProtKB-UniRule"/>
</dbReference>
<dbReference type="CDD" id="cd01898">
    <property type="entry name" value="Obg"/>
    <property type="match status" value="1"/>
</dbReference>
<dbReference type="FunFam" id="2.70.210.12:FF:000001">
    <property type="entry name" value="GTPase Obg"/>
    <property type="match status" value="1"/>
</dbReference>
<dbReference type="FunFam" id="3.40.50.300:FF:000515">
    <property type="entry name" value="GTPase Obg"/>
    <property type="match status" value="1"/>
</dbReference>
<dbReference type="Gene3D" id="3.30.300.350">
    <property type="entry name" value="GTP-binding protein OBG, C-terminal domain"/>
    <property type="match status" value="1"/>
</dbReference>
<dbReference type="Gene3D" id="2.70.210.12">
    <property type="entry name" value="GTP1/OBG domain"/>
    <property type="match status" value="1"/>
</dbReference>
<dbReference type="Gene3D" id="3.40.50.300">
    <property type="entry name" value="P-loop containing nucleotide triphosphate hydrolases"/>
    <property type="match status" value="1"/>
</dbReference>
<dbReference type="HAMAP" id="MF_01454">
    <property type="entry name" value="GTPase_Obg"/>
    <property type="match status" value="1"/>
</dbReference>
<dbReference type="InterPro" id="IPR031167">
    <property type="entry name" value="G_OBG"/>
</dbReference>
<dbReference type="InterPro" id="IPR006073">
    <property type="entry name" value="GTP-bd"/>
</dbReference>
<dbReference type="InterPro" id="IPR014100">
    <property type="entry name" value="GTP-bd_Obg/CgtA"/>
</dbReference>
<dbReference type="InterPro" id="IPR036346">
    <property type="entry name" value="GTP-bd_prot_GTP1/OBG_C_sf"/>
</dbReference>
<dbReference type="InterPro" id="IPR006074">
    <property type="entry name" value="GTP1-OBG_CS"/>
</dbReference>
<dbReference type="InterPro" id="IPR006169">
    <property type="entry name" value="GTP1_OBG_dom"/>
</dbReference>
<dbReference type="InterPro" id="IPR036726">
    <property type="entry name" value="GTP1_OBG_dom_sf"/>
</dbReference>
<dbReference type="InterPro" id="IPR045086">
    <property type="entry name" value="OBG_GTPase"/>
</dbReference>
<dbReference type="InterPro" id="IPR015349">
    <property type="entry name" value="OCT_dom"/>
</dbReference>
<dbReference type="InterPro" id="IPR027417">
    <property type="entry name" value="P-loop_NTPase"/>
</dbReference>
<dbReference type="NCBIfam" id="TIGR02729">
    <property type="entry name" value="Obg_CgtA"/>
    <property type="match status" value="1"/>
</dbReference>
<dbReference type="NCBIfam" id="TIGR03595">
    <property type="entry name" value="Obg_CgtA_exten"/>
    <property type="match status" value="1"/>
</dbReference>
<dbReference type="NCBIfam" id="NF008954">
    <property type="entry name" value="PRK12296.1"/>
    <property type="match status" value="1"/>
</dbReference>
<dbReference type="NCBIfam" id="NF008955">
    <property type="entry name" value="PRK12297.1"/>
    <property type="match status" value="1"/>
</dbReference>
<dbReference type="NCBIfam" id="NF008956">
    <property type="entry name" value="PRK12299.1"/>
    <property type="match status" value="1"/>
</dbReference>
<dbReference type="PANTHER" id="PTHR11702">
    <property type="entry name" value="DEVELOPMENTALLY REGULATED GTP-BINDING PROTEIN-RELATED"/>
    <property type="match status" value="1"/>
</dbReference>
<dbReference type="PANTHER" id="PTHR11702:SF31">
    <property type="entry name" value="MITOCHONDRIAL RIBOSOME-ASSOCIATED GTPASE 2"/>
    <property type="match status" value="1"/>
</dbReference>
<dbReference type="Pfam" id="PF09269">
    <property type="entry name" value="DUF1967"/>
    <property type="match status" value="1"/>
</dbReference>
<dbReference type="Pfam" id="PF01018">
    <property type="entry name" value="GTP1_OBG"/>
    <property type="match status" value="1"/>
</dbReference>
<dbReference type="Pfam" id="PF01926">
    <property type="entry name" value="MMR_HSR1"/>
    <property type="match status" value="1"/>
</dbReference>
<dbReference type="PIRSF" id="PIRSF002401">
    <property type="entry name" value="GTP_bd_Obg/CgtA"/>
    <property type="match status" value="1"/>
</dbReference>
<dbReference type="PRINTS" id="PR00326">
    <property type="entry name" value="GTP1OBG"/>
</dbReference>
<dbReference type="SUPFAM" id="SSF102741">
    <property type="entry name" value="Obg GTP-binding protein C-terminal domain"/>
    <property type="match status" value="1"/>
</dbReference>
<dbReference type="SUPFAM" id="SSF82051">
    <property type="entry name" value="Obg GTP-binding protein N-terminal domain"/>
    <property type="match status" value="1"/>
</dbReference>
<dbReference type="SUPFAM" id="SSF52540">
    <property type="entry name" value="P-loop containing nucleoside triphosphate hydrolases"/>
    <property type="match status" value="1"/>
</dbReference>
<dbReference type="PROSITE" id="PS51710">
    <property type="entry name" value="G_OBG"/>
    <property type="match status" value="1"/>
</dbReference>
<dbReference type="PROSITE" id="PS00905">
    <property type="entry name" value="GTP1_OBG"/>
    <property type="match status" value="1"/>
</dbReference>
<dbReference type="PROSITE" id="PS51883">
    <property type="entry name" value="OBG"/>
    <property type="match status" value="1"/>
</dbReference>
<dbReference type="PROSITE" id="PS51881">
    <property type="entry name" value="OCT"/>
    <property type="match status" value="1"/>
</dbReference>
<sequence>MFVDQVKISLKAGDGGNGITAYRREKYVPFGGPAGGDGGKGASVVFEVDEGLRTLLDFRYQRHFKASKGENGQSSNMHGKNAEDLVLKVPPGTIIKNVETDEVLADLVEDGQRAVVAKGGRGGRGNSRFATPRNPAPDFSEKGEPGEELDVSLELKLLADVGLVGFPSVGKSTLLSIVSKAKPKIGAYHFTTIKPNLGVVSTPDQRSFVMADLPGLIEGASDGVGLGHQFLRHVERTKVIVHMIDMSGSEGREPIEDYKVINQELAAYEQRLEDRPQIVVANKMDLPESQDNLNLFKEEIGEDVPVIPVSTITRDNIDQLLYAIADKLEEYKDVDFTVEEEESVGINRVLYKHTPSQDKFTISRDDDGAYVVSGNAIERMFKMTDFNSDPAVRRFARQMRSMGIDDALRERGCKNGDIVRILGGEFEFVE</sequence>
<keyword id="KW-0963">Cytoplasm</keyword>
<keyword id="KW-0342">GTP-binding</keyword>
<keyword id="KW-0378">Hydrolase</keyword>
<keyword id="KW-0460">Magnesium</keyword>
<keyword id="KW-0479">Metal-binding</keyword>
<keyword id="KW-0547">Nucleotide-binding</keyword>
<keyword id="KW-1185">Reference proteome</keyword>
<reference key="1">
    <citation type="book" date="2006" name="Gram positive pathogens, 2nd edition">
        <title>The Staphylococcus aureus NCTC 8325 genome.</title>
        <editorList>
            <person name="Fischetti V."/>
            <person name="Novick R."/>
            <person name="Ferretti J."/>
            <person name="Portnoy D."/>
            <person name="Rood J."/>
        </editorList>
        <authorList>
            <person name="Gillaspy A.F."/>
            <person name="Worrell V."/>
            <person name="Orvis J."/>
            <person name="Roe B.A."/>
            <person name="Dyer D.W."/>
            <person name="Iandolo J.J."/>
        </authorList>
    </citation>
    <scope>NUCLEOTIDE SEQUENCE [LARGE SCALE GENOMIC DNA]</scope>
    <source>
        <strain>NCTC 8325 / PS 47</strain>
    </source>
</reference>
<feature type="chain" id="PRO_0000386278" description="GTPase Obg">
    <location>
        <begin position="1"/>
        <end position="430"/>
    </location>
</feature>
<feature type="domain" description="Obg" evidence="3">
    <location>
        <begin position="1"/>
        <end position="158"/>
    </location>
</feature>
<feature type="domain" description="OBG-type G" evidence="1">
    <location>
        <begin position="159"/>
        <end position="329"/>
    </location>
</feature>
<feature type="domain" description="OCT" evidence="2">
    <location>
        <begin position="352"/>
        <end position="430"/>
    </location>
</feature>
<feature type="region of interest" description="Disordered" evidence="4">
    <location>
        <begin position="118"/>
        <end position="145"/>
    </location>
</feature>
<feature type="binding site" evidence="1">
    <location>
        <begin position="165"/>
        <end position="172"/>
    </location>
    <ligand>
        <name>GTP</name>
        <dbReference type="ChEBI" id="CHEBI:37565"/>
    </ligand>
</feature>
<feature type="binding site" evidence="1">
    <location>
        <position position="172"/>
    </location>
    <ligand>
        <name>Mg(2+)</name>
        <dbReference type="ChEBI" id="CHEBI:18420"/>
    </ligand>
</feature>
<feature type="binding site" evidence="1">
    <location>
        <begin position="190"/>
        <end position="194"/>
    </location>
    <ligand>
        <name>GTP</name>
        <dbReference type="ChEBI" id="CHEBI:37565"/>
    </ligand>
</feature>
<feature type="binding site" evidence="1">
    <location>
        <position position="192"/>
    </location>
    <ligand>
        <name>Mg(2+)</name>
        <dbReference type="ChEBI" id="CHEBI:18420"/>
    </ligand>
</feature>
<feature type="binding site" evidence="1">
    <location>
        <begin position="212"/>
        <end position="215"/>
    </location>
    <ligand>
        <name>GTP</name>
        <dbReference type="ChEBI" id="CHEBI:37565"/>
    </ligand>
</feature>
<feature type="binding site" evidence="1">
    <location>
        <begin position="282"/>
        <end position="285"/>
    </location>
    <ligand>
        <name>GTP</name>
        <dbReference type="ChEBI" id="CHEBI:37565"/>
    </ligand>
</feature>
<feature type="binding site" evidence="1">
    <location>
        <begin position="310"/>
        <end position="312"/>
    </location>
    <ligand>
        <name>GTP</name>
        <dbReference type="ChEBI" id="CHEBI:37565"/>
    </ligand>
</feature>
<organism>
    <name type="scientific">Staphylococcus aureus (strain NCTC 8325 / PS 47)</name>
    <dbReference type="NCBI Taxonomy" id="93061"/>
    <lineage>
        <taxon>Bacteria</taxon>
        <taxon>Bacillati</taxon>
        <taxon>Bacillota</taxon>
        <taxon>Bacilli</taxon>
        <taxon>Bacillales</taxon>
        <taxon>Staphylococcaceae</taxon>
        <taxon>Staphylococcus</taxon>
    </lineage>
</organism>
<name>OBG_STAA8</name>
<accession>Q2FXT1</accession>
<proteinExistence type="inferred from homology"/>